<accession>A4GG93</accession>
<reference key="1">
    <citation type="journal article" date="2007" name="BMC Genomics">
        <title>Rapid evolutionary change of common bean (Phaseolus vulgaris L) plastome, and the genomic diversification of legume chloroplasts.</title>
        <authorList>
            <person name="Guo X."/>
            <person name="Castillo-Ramirez S."/>
            <person name="Gonzalez V."/>
            <person name="Bustos P."/>
            <person name="Fernandez-Vazquez J.L."/>
            <person name="Santamaria R.I."/>
            <person name="Arellano J."/>
            <person name="Cevallos M.A."/>
            <person name="Davila G."/>
        </authorList>
    </citation>
    <scope>NUCLEOTIDE SEQUENCE [LARGE SCALE GENOMIC DNA]</scope>
    <source>
        <strain>cv. Negro Jamapa</strain>
    </source>
</reference>
<reference key="2">
    <citation type="submission" date="2007-10" db="EMBL/GenBank/DDBJ databases">
        <title>Complete nucleotide sequence of the plastid genome of the common bean, Phaseolus vulgaris.</title>
        <authorList>
            <person name="Moore M.J."/>
            <person name="Triplett E.W."/>
            <person name="Broughton W.J."/>
            <person name="Soltis P.S."/>
            <person name="Soltis D.E."/>
        </authorList>
    </citation>
    <scope>NUCLEOTIDE SEQUENCE [LARGE SCALE GENOMIC DNA]</scope>
</reference>
<gene>
    <name evidence="1" type="primary">ndhK</name>
</gene>
<feature type="chain" id="PRO_0000358574" description="NAD(P)H-quinone oxidoreductase subunit K, chloroplastic">
    <location>
        <begin position="1"/>
        <end position="212"/>
    </location>
</feature>
<feature type="binding site" evidence="1">
    <location>
        <position position="43"/>
    </location>
    <ligand>
        <name>[4Fe-4S] cluster</name>
        <dbReference type="ChEBI" id="CHEBI:49883"/>
    </ligand>
</feature>
<feature type="binding site" evidence="1">
    <location>
        <position position="44"/>
    </location>
    <ligand>
        <name>[4Fe-4S] cluster</name>
        <dbReference type="ChEBI" id="CHEBI:49883"/>
    </ligand>
</feature>
<feature type="binding site" evidence="1">
    <location>
        <position position="108"/>
    </location>
    <ligand>
        <name>[4Fe-4S] cluster</name>
        <dbReference type="ChEBI" id="CHEBI:49883"/>
    </ligand>
</feature>
<feature type="binding site" evidence="1">
    <location>
        <position position="139"/>
    </location>
    <ligand>
        <name>[4Fe-4S] cluster</name>
        <dbReference type="ChEBI" id="CHEBI:49883"/>
    </ligand>
</feature>
<comment type="function">
    <text evidence="1">NDH shuttles electrons from NAD(P)H:plastoquinone, via FMN and iron-sulfur (Fe-S) centers, to quinones in the photosynthetic chain and possibly in a chloroplast respiratory chain. The immediate electron acceptor for the enzyme in this species is believed to be plastoquinone. Couples the redox reaction to proton translocation, and thus conserves the redox energy in a proton gradient.</text>
</comment>
<comment type="catalytic activity">
    <reaction evidence="1">
        <text>a plastoquinone + NADH + (n+1) H(+)(in) = a plastoquinol + NAD(+) + n H(+)(out)</text>
        <dbReference type="Rhea" id="RHEA:42608"/>
        <dbReference type="Rhea" id="RHEA-COMP:9561"/>
        <dbReference type="Rhea" id="RHEA-COMP:9562"/>
        <dbReference type="ChEBI" id="CHEBI:15378"/>
        <dbReference type="ChEBI" id="CHEBI:17757"/>
        <dbReference type="ChEBI" id="CHEBI:57540"/>
        <dbReference type="ChEBI" id="CHEBI:57945"/>
        <dbReference type="ChEBI" id="CHEBI:62192"/>
    </reaction>
</comment>
<comment type="catalytic activity">
    <reaction evidence="1">
        <text>a plastoquinone + NADPH + (n+1) H(+)(in) = a plastoquinol + NADP(+) + n H(+)(out)</text>
        <dbReference type="Rhea" id="RHEA:42612"/>
        <dbReference type="Rhea" id="RHEA-COMP:9561"/>
        <dbReference type="Rhea" id="RHEA-COMP:9562"/>
        <dbReference type="ChEBI" id="CHEBI:15378"/>
        <dbReference type="ChEBI" id="CHEBI:17757"/>
        <dbReference type="ChEBI" id="CHEBI:57783"/>
        <dbReference type="ChEBI" id="CHEBI:58349"/>
        <dbReference type="ChEBI" id="CHEBI:62192"/>
    </reaction>
</comment>
<comment type="cofactor">
    <cofactor evidence="1">
        <name>[4Fe-4S] cluster</name>
        <dbReference type="ChEBI" id="CHEBI:49883"/>
    </cofactor>
    <text evidence="1">Binds 1 [4Fe-4S] cluster.</text>
</comment>
<comment type="subunit">
    <text evidence="1">NDH is composed of at least 16 different subunits, 5 of which are encoded in the nucleus.</text>
</comment>
<comment type="subcellular location">
    <subcellularLocation>
        <location evidence="1">Plastid</location>
        <location evidence="1">Chloroplast thylakoid membrane</location>
        <topology evidence="1">Peripheral membrane protein</topology>
        <orientation evidence="1">Stromal side</orientation>
    </subcellularLocation>
</comment>
<comment type="similarity">
    <text evidence="1">Belongs to the complex I 20 kDa subunit family.</text>
</comment>
<proteinExistence type="inferred from homology"/>
<evidence type="ECO:0000255" key="1">
    <source>
        <dbReference type="HAMAP-Rule" id="MF_01356"/>
    </source>
</evidence>
<keyword id="KW-0004">4Fe-4S</keyword>
<keyword id="KW-0150">Chloroplast</keyword>
<keyword id="KW-0408">Iron</keyword>
<keyword id="KW-0411">Iron-sulfur</keyword>
<keyword id="KW-0472">Membrane</keyword>
<keyword id="KW-0479">Metal-binding</keyword>
<keyword id="KW-0520">NAD</keyword>
<keyword id="KW-0521">NADP</keyword>
<keyword id="KW-0934">Plastid</keyword>
<keyword id="KW-0618">Plastoquinone</keyword>
<keyword id="KW-0874">Quinone</keyword>
<keyword id="KW-0793">Thylakoid</keyword>
<keyword id="KW-1278">Translocase</keyword>
<keyword id="KW-0813">Transport</keyword>
<protein>
    <recommendedName>
        <fullName evidence="1">NAD(P)H-quinone oxidoreductase subunit K, chloroplastic</fullName>
        <ecNumber evidence="1">7.1.1.-</ecNumber>
    </recommendedName>
    <alternativeName>
        <fullName evidence="1">NAD(P)H dehydrogenase subunit K</fullName>
    </alternativeName>
    <alternativeName>
        <fullName evidence="1">NADH-plastoquinone oxidoreductase subunit K</fullName>
    </alternativeName>
</protein>
<sequence length="212" mass="23948">MNSIEFPLLDQTTQNSVISTTLNDFSNWSRLSSLWPLLYGTSCCFIEFASLIGSRFDFDRYGLVPRSSPRQADLILTAGTVTMKMAPSLVRLYEQMPEPKYVIAMGACTITGGMFSTDSYSTVRGVDKLIPVDVYLPGCPPKPEAIIDAITKLRKKISREIYEDPISFQRENRCFTINHKFHVGYSTYTGNYGQEFFYQPPSTSEIASDTFF</sequence>
<name>NDHK_PHAVU</name>
<organism>
    <name type="scientific">Phaseolus vulgaris</name>
    <name type="common">Kidney bean</name>
    <name type="synonym">French bean</name>
    <dbReference type="NCBI Taxonomy" id="3885"/>
    <lineage>
        <taxon>Eukaryota</taxon>
        <taxon>Viridiplantae</taxon>
        <taxon>Streptophyta</taxon>
        <taxon>Embryophyta</taxon>
        <taxon>Tracheophyta</taxon>
        <taxon>Spermatophyta</taxon>
        <taxon>Magnoliopsida</taxon>
        <taxon>eudicotyledons</taxon>
        <taxon>Gunneridae</taxon>
        <taxon>Pentapetalae</taxon>
        <taxon>rosids</taxon>
        <taxon>fabids</taxon>
        <taxon>Fabales</taxon>
        <taxon>Fabaceae</taxon>
        <taxon>Papilionoideae</taxon>
        <taxon>50 kb inversion clade</taxon>
        <taxon>NPAAA clade</taxon>
        <taxon>indigoferoid/millettioid clade</taxon>
        <taxon>Phaseoleae</taxon>
        <taxon>Phaseolus</taxon>
    </lineage>
</organism>
<dbReference type="EC" id="7.1.1.-" evidence="1"/>
<dbReference type="EMBL" id="DQ886273">
    <property type="protein sequence ID" value="ABH88074.1"/>
    <property type="molecule type" value="Genomic_DNA"/>
</dbReference>
<dbReference type="EMBL" id="EU196765">
    <property type="protein sequence ID" value="ABW22794.1"/>
    <property type="molecule type" value="Genomic_DNA"/>
</dbReference>
<dbReference type="RefSeq" id="YP_001122794.1">
    <property type="nucleotide sequence ID" value="NC_009259.1"/>
</dbReference>
<dbReference type="SMR" id="A4GG93"/>
<dbReference type="GeneID" id="4961743"/>
<dbReference type="KEGG" id="pvu:4961743"/>
<dbReference type="GO" id="GO:0009535">
    <property type="term" value="C:chloroplast thylakoid membrane"/>
    <property type="evidence" value="ECO:0007669"/>
    <property type="project" value="UniProtKB-SubCell"/>
</dbReference>
<dbReference type="GO" id="GO:0045271">
    <property type="term" value="C:respiratory chain complex I"/>
    <property type="evidence" value="ECO:0007669"/>
    <property type="project" value="TreeGrafter"/>
</dbReference>
<dbReference type="GO" id="GO:0051539">
    <property type="term" value="F:4 iron, 4 sulfur cluster binding"/>
    <property type="evidence" value="ECO:0007669"/>
    <property type="project" value="UniProtKB-KW"/>
</dbReference>
<dbReference type="GO" id="GO:0005506">
    <property type="term" value="F:iron ion binding"/>
    <property type="evidence" value="ECO:0007669"/>
    <property type="project" value="UniProtKB-UniRule"/>
</dbReference>
<dbReference type="GO" id="GO:0008137">
    <property type="term" value="F:NADH dehydrogenase (ubiquinone) activity"/>
    <property type="evidence" value="ECO:0007669"/>
    <property type="project" value="InterPro"/>
</dbReference>
<dbReference type="GO" id="GO:0048038">
    <property type="term" value="F:quinone binding"/>
    <property type="evidence" value="ECO:0007669"/>
    <property type="project" value="UniProtKB-KW"/>
</dbReference>
<dbReference type="GO" id="GO:0009060">
    <property type="term" value="P:aerobic respiration"/>
    <property type="evidence" value="ECO:0007669"/>
    <property type="project" value="TreeGrafter"/>
</dbReference>
<dbReference type="GO" id="GO:0015990">
    <property type="term" value="P:electron transport coupled proton transport"/>
    <property type="evidence" value="ECO:0007669"/>
    <property type="project" value="TreeGrafter"/>
</dbReference>
<dbReference type="GO" id="GO:0019684">
    <property type="term" value="P:photosynthesis, light reaction"/>
    <property type="evidence" value="ECO:0007669"/>
    <property type="project" value="UniProtKB-UniRule"/>
</dbReference>
<dbReference type="FunFam" id="3.40.50.12280:FF:000003">
    <property type="entry name" value="NAD(P)H-quinone oxidoreductase subunit K, chloroplastic"/>
    <property type="match status" value="1"/>
</dbReference>
<dbReference type="Gene3D" id="3.40.50.12280">
    <property type="match status" value="1"/>
</dbReference>
<dbReference type="HAMAP" id="MF_01356">
    <property type="entry name" value="NDH1_NuoB"/>
    <property type="match status" value="1"/>
</dbReference>
<dbReference type="InterPro" id="IPR006137">
    <property type="entry name" value="NADH_UbQ_OxRdtase-like_20kDa"/>
</dbReference>
<dbReference type="InterPro" id="IPR006138">
    <property type="entry name" value="NADH_UQ_OxRdtase_20Kd_su"/>
</dbReference>
<dbReference type="NCBIfam" id="TIGR01957">
    <property type="entry name" value="nuoB_fam"/>
    <property type="match status" value="1"/>
</dbReference>
<dbReference type="NCBIfam" id="NF005012">
    <property type="entry name" value="PRK06411.1"/>
    <property type="match status" value="1"/>
</dbReference>
<dbReference type="PANTHER" id="PTHR11995">
    <property type="entry name" value="NADH DEHYDROGENASE"/>
    <property type="match status" value="1"/>
</dbReference>
<dbReference type="PANTHER" id="PTHR11995:SF14">
    <property type="entry name" value="NADH DEHYDROGENASE [UBIQUINONE] IRON-SULFUR PROTEIN 7, MITOCHONDRIAL"/>
    <property type="match status" value="1"/>
</dbReference>
<dbReference type="Pfam" id="PF01058">
    <property type="entry name" value="Oxidored_q6"/>
    <property type="match status" value="1"/>
</dbReference>
<dbReference type="SUPFAM" id="SSF56770">
    <property type="entry name" value="HydA/Nqo6-like"/>
    <property type="match status" value="1"/>
</dbReference>
<dbReference type="PROSITE" id="PS01150">
    <property type="entry name" value="COMPLEX1_20K"/>
    <property type="match status" value="1"/>
</dbReference>
<geneLocation type="chloroplast"/>